<keyword id="KW-0067">ATP-binding</keyword>
<keyword id="KW-0119">Carbohydrate metabolism</keyword>
<keyword id="KW-0418">Kinase</keyword>
<keyword id="KW-0547">Nucleotide-binding</keyword>
<keyword id="KW-0808">Transferase</keyword>
<sequence>MSTKELYIGVMSGTSMDGVDCALVEFDQEQVRLIAHSDYPMPADLRQKLLSVCTGQATNLKQIGELDHRLGHLFADAVMDLLSQAGVDTSQIRAIGNHGQTVFHQPNGEFPFTTQLGDANIIATRTNIDTVADFRRKDMALGGQGAPLVPAFHQSVFALQDSTTVVLNIGGIANISVLHPTRPVLGYDTGPGNMLMDAWCETHTQQNYDKDARFALQGEVNEALLNTLLQEPYLHQDAPKSTGRELFNMEWLTAKLQGQNYRSEDVQRTLCEYTALTISKEVERFRYGPTPQLLVCGGGARNPLLMQRLQQQLSHWQVSTTDAKGVSGDYMEAMAFAWLAYRHLHRLPSNLPEVTGASRLASLGVLYSKA</sequence>
<reference key="1">
    <citation type="submission" date="2002-12" db="EMBL/GenBank/DDBJ databases">
        <title>Complete genome sequence of Vibrio vulnificus CMCP6.</title>
        <authorList>
            <person name="Rhee J.H."/>
            <person name="Kim S.Y."/>
            <person name="Chung S.S."/>
            <person name="Kim J.J."/>
            <person name="Moon Y.H."/>
            <person name="Jeong H."/>
            <person name="Choy H.E."/>
        </authorList>
    </citation>
    <scope>NUCLEOTIDE SEQUENCE [LARGE SCALE GENOMIC DNA]</scope>
    <source>
        <strain>CMCP6</strain>
    </source>
</reference>
<accession>Q8DET7</accession>
<proteinExistence type="inferred from homology"/>
<feature type="chain" id="PRO_0000250081" description="Anhydro-N-acetylmuramic acid kinase">
    <location>
        <begin position="1"/>
        <end position="370"/>
    </location>
</feature>
<feature type="binding site" evidence="1">
    <location>
        <begin position="13"/>
        <end position="20"/>
    </location>
    <ligand>
        <name>ATP</name>
        <dbReference type="ChEBI" id="CHEBI:30616"/>
    </ligand>
</feature>
<evidence type="ECO:0000255" key="1">
    <source>
        <dbReference type="HAMAP-Rule" id="MF_01270"/>
    </source>
</evidence>
<evidence type="ECO:0000305" key="2"/>
<protein>
    <recommendedName>
        <fullName evidence="1">Anhydro-N-acetylmuramic acid kinase</fullName>
        <ecNumber evidence="1">2.7.1.170</ecNumber>
    </recommendedName>
    <alternativeName>
        <fullName evidence="1">AnhMurNAc kinase</fullName>
    </alternativeName>
</protein>
<dbReference type="EC" id="2.7.1.170" evidence="1"/>
<dbReference type="EMBL" id="AE016795">
    <property type="protein sequence ID" value="AAO09016.1"/>
    <property type="status" value="ALT_INIT"/>
    <property type="molecule type" value="Genomic_DNA"/>
</dbReference>
<dbReference type="RefSeq" id="WP_011078586.1">
    <property type="nucleotide sequence ID" value="NC_004459.3"/>
</dbReference>
<dbReference type="SMR" id="Q8DET7"/>
<dbReference type="KEGG" id="vvu:VV1_0497"/>
<dbReference type="HOGENOM" id="CLU_038782_0_0_6"/>
<dbReference type="UniPathway" id="UPA00343"/>
<dbReference type="UniPathway" id="UPA00544"/>
<dbReference type="Proteomes" id="UP000002275">
    <property type="component" value="Chromosome 1"/>
</dbReference>
<dbReference type="GO" id="GO:0005524">
    <property type="term" value="F:ATP binding"/>
    <property type="evidence" value="ECO:0007669"/>
    <property type="project" value="UniProtKB-UniRule"/>
</dbReference>
<dbReference type="GO" id="GO:0016301">
    <property type="term" value="F:kinase activity"/>
    <property type="evidence" value="ECO:0007669"/>
    <property type="project" value="UniProtKB-KW"/>
</dbReference>
<dbReference type="GO" id="GO:0016773">
    <property type="term" value="F:phosphotransferase activity, alcohol group as acceptor"/>
    <property type="evidence" value="ECO:0007669"/>
    <property type="project" value="UniProtKB-UniRule"/>
</dbReference>
<dbReference type="GO" id="GO:0097175">
    <property type="term" value="P:1,6-anhydro-N-acetyl-beta-muramic acid catabolic process"/>
    <property type="evidence" value="ECO:0007669"/>
    <property type="project" value="UniProtKB-UniRule"/>
</dbReference>
<dbReference type="GO" id="GO:0006040">
    <property type="term" value="P:amino sugar metabolic process"/>
    <property type="evidence" value="ECO:0007669"/>
    <property type="project" value="InterPro"/>
</dbReference>
<dbReference type="GO" id="GO:0009254">
    <property type="term" value="P:peptidoglycan turnover"/>
    <property type="evidence" value="ECO:0007669"/>
    <property type="project" value="UniProtKB-UniRule"/>
</dbReference>
<dbReference type="CDD" id="cd24050">
    <property type="entry name" value="ASKHA_NBD_ANMK"/>
    <property type="match status" value="1"/>
</dbReference>
<dbReference type="Gene3D" id="3.30.420.40">
    <property type="match status" value="2"/>
</dbReference>
<dbReference type="HAMAP" id="MF_01270">
    <property type="entry name" value="AnhMurNAc_kinase"/>
    <property type="match status" value="1"/>
</dbReference>
<dbReference type="InterPro" id="IPR005338">
    <property type="entry name" value="Anhydro_N_Ac-Mur_kinase"/>
</dbReference>
<dbReference type="InterPro" id="IPR043129">
    <property type="entry name" value="ATPase_NBD"/>
</dbReference>
<dbReference type="NCBIfam" id="NF007139">
    <property type="entry name" value="PRK09585.1-3"/>
    <property type="match status" value="1"/>
</dbReference>
<dbReference type="NCBIfam" id="NF007148">
    <property type="entry name" value="PRK09585.3-2"/>
    <property type="match status" value="1"/>
</dbReference>
<dbReference type="PANTHER" id="PTHR30605">
    <property type="entry name" value="ANHYDRO-N-ACETYLMURAMIC ACID KINASE"/>
    <property type="match status" value="1"/>
</dbReference>
<dbReference type="PANTHER" id="PTHR30605:SF0">
    <property type="entry name" value="ANHYDRO-N-ACETYLMURAMIC ACID KINASE"/>
    <property type="match status" value="1"/>
</dbReference>
<dbReference type="Pfam" id="PF03702">
    <property type="entry name" value="AnmK"/>
    <property type="match status" value="1"/>
</dbReference>
<dbReference type="SUPFAM" id="SSF53067">
    <property type="entry name" value="Actin-like ATPase domain"/>
    <property type="match status" value="1"/>
</dbReference>
<gene>
    <name evidence="1" type="primary">anmK</name>
    <name type="ordered locus">VV1_0497</name>
</gene>
<comment type="function">
    <text evidence="1">Catalyzes the specific phosphorylation of 1,6-anhydro-N-acetylmuramic acid (anhMurNAc) with the simultaneous cleavage of the 1,6-anhydro ring, generating MurNAc-6-P. Is required for the utilization of anhMurNAc either imported from the medium or derived from its own cell wall murein, and thus plays a role in cell wall recycling.</text>
</comment>
<comment type="catalytic activity">
    <reaction evidence="1">
        <text>1,6-anhydro-N-acetyl-beta-muramate + ATP + H2O = N-acetyl-D-muramate 6-phosphate + ADP + H(+)</text>
        <dbReference type="Rhea" id="RHEA:24952"/>
        <dbReference type="ChEBI" id="CHEBI:15377"/>
        <dbReference type="ChEBI" id="CHEBI:15378"/>
        <dbReference type="ChEBI" id="CHEBI:30616"/>
        <dbReference type="ChEBI" id="CHEBI:58690"/>
        <dbReference type="ChEBI" id="CHEBI:58722"/>
        <dbReference type="ChEBI" id="CHEBI:456216"/>
        <dbReference type="EC" id="2.7.1.170"/>
    </reaction>
</comment>
<comment type="pathway">
    <text evidence="1">Amino-sugar metabolism; 1,6-anhydro-N-acetylmuramate degradation.</text>
</comment>
<comment type="pathway">
    <text evidence="1">Cell wall biogenesis; peptidoglycan recycling.</text>
</comment>
<comment type="similarity">
    <text evidence="1">Belongs to the anhydro-N-acetylmuramic acid kinase family.</text>
</comment>
<comment type="sequence caution" evidence="2">
    <conflict type="erroneous initiation">
        <sequence resource="EMBL-CDS" id="AAO09016"/>
    </conflict>
</comment>
<organism>
    <name type="scientific">Vibrio vulnificus (strain CMCP6)</name>
    <dbReference type="NCBI Taxonomy" id="216895"/>
    <lineage>
        <taxon>Bacteria</taxon>
        <taxon>Pseudomonadati</taxon>
        <taxon>Pseudomonadota</taxon>
        <taxon>Gammaproteobacteria</taxon>
        <taxon>Vibrionales</taxon>
        <taxon>Vibrionaceae</taxon>
        <taxon>Vibrio</taxon>
    </lineage>
</organism>
<name>ANMK_VIBVU</name>